<name>INLPD_MYCBO</name>
<comment type="function">
    <text evidence="1 2">Involved in the biosynthesis of a unique class of isonitrile lipopeptides (INLPs) that seem to play a role in metal acquisition. Catalyzes a Michael addition of glycine to the beta-position of an alpha,beta-unsaturated fatty acyl-[ACP], producing a (3R)-3-[(carboxymethyl)amino]fatty acid. Acts on the (2E)-decenoyl moiety loaded on the acyl-carrier protein (ACP) BQ2027_MB0103, forming the product (3R)-3-[(carboxymethyl)amino]decanoate released from the ACP (By similarity). Displays thioesterase activity with a preference for long chain fatty acyl groups (By similarity).</text>
</comment>
<comment type="catalytic activity">
    <reaction evidence="1">
        <text>a (3R)-3-[(carboxymethyl)amino]fatty acid + holo-[ACP] + H(+) = a (2E)-enoyl-[ACP] + glycine + H2O</text>
        <dbReference type="Rhea" id="RHEA:74923"/>
        <dbReference type="Rhea" id="RHEA-COMP:9685"/>
        <dbReference type="Rhea" id="RHEA-COMP:9925"/>
        <dbReference type="ChEBI" id="CHEBI:15377"/>
        <dbReference type="ChEBI" id="CHEBI:15378"/>
        <dbReference type="ChEBI" id="CHEBI:57305"/>
        <dbReference type="ChEBI" id="CHEBI:64479"/>
        <dbReference type="ChEBI" id="CHEBI:78784"/>
        <dbReference type="ChEBI" id="CHEBI:193080"/>
        <dbReference type="EC" id="4.3.2.11"/>
    </reaction>
    <physiologicalReaction direction="right-to-left" evidence="1">
        <dbReference type="Rhea" id="RHEA:74925"/>
    </physiologicalReaction>
</comment>
<comment type="catalytic activity">
    <reaction evidence="1">
        <text>(3R)-3-[(carboxylmethyl)amino]decanoate + holo-[ACP] + H(+) = (2E)-decenoyl-[ACP] + glycine + H2O</text>
        <dbReference type="Rhea" id="RHEA:75543"/>
        <dbReference type="Rhea" id="RHEA-COMP:9639"/>
        <dbReference type="Rhea" id="RHEA-COMP:9685"/>
        <dbReference type="ChEBI" id="CHEBI:15377"/>
        <dbReference type="ChEBI" id="CHEBI:15378"/>
        <dbReference type="ChEBI" id="CHEBI:57305"/>
        <dbReference type="ChEBI" id="CHEBI:64479"/>
        <dbReference type="ChEBI" id="CHEBI:78467"/>
        <dbReference type="ChEBI" id="CHEBI:194341"/>
    </reaction>
    <physiologicalReaction direction="right-to-left" evidence="1">
        <dbReference type="Rhea" id="RHEA:75545"/>
    </physiologicalReaction>
</comment>
<comment type="catalytic activity">
    <reaction evidence="2">
        <text>a fatty acyl-CoA + H2O = a fatty acid + CoA + H(+)</text>
        <dbReference type="Rhea" id="RHEA:16781"/>
        <dbReference type="ChEBI" id="CHEBI:15377"/>
        <dbReference type="ChEBI" id="CHEBI:15378"/>
        <dbReference type="ChEBI" id="CHEBI:28868"/>
        <dbReference type="ChEBI" id="CHEBI:57287"/>
        <dbReference type="ChEBI" id="CHEBI:77636"/>
    </reaction>
</comment>
<comment type="similarity">
    <text evidence="3">Belongs to the FcoT family.</text>
</comment>
<feature type="chain" id="PRO_0000103669" description="(2E)-enoyl-[ACP] glycyltransferase">
    <location>
        <begin position="1"/>
        <end position="183"/>
    </location>
</feature>
<dbReference type="EC" id="4.3.2.11" evidence="1"/>
<dbReference type="EC" id="3.1.2.-" evidence="2"/>
<dbReference type="EMBL" id="LT708304">
    <property type="protein sequence ID" value="SIT98505.1"/>
    <property type="molecule type" value="Genomic_DNA"/>
</dbReference>
<dbReference type="RefSeq" id="NP_853769.1">
    <property type="nucleotide sequence ID" value="NC_002945.3"/>
</dbReference>
<dbReference type="RefSeq" id="WP_003899810.1">
    <property type="nucleotide sequence ID" value="NC_002945.4"/>
</dbReference>
<dbReference type="SMR" id="P64686"/>
<dbReference type="PATRIC" id="fig|233413.5.peg.113"/>
<dbReference type="Proteomes" id="UP000001419">
    <property type="component" value="Chromosome"/>
</dbReference>
<dbReference type="GO" id="GO:0047617">
    <property type="term" value="F:fatty acyl-CoA hydrolase activity"/>
    <property type="evidence" value="ECO:0007669"/>
    <property type="project" value="RHEA"/>
</dbReference>
<dbReference type="GO" id="GO:0016829">
    <property type="term" value="F:lyase activity"/>
    <property type="evidence" value="ECO:0007669"/>
    <property type="project" value="UniProtKB-KW"/>
</dbReference>
<dbReference type="GO" id="GO:0006631">
    <property type="term" value="P:fatty acid metabolic process"/>
    <property type="evidence" value="ECO:0007669"/>
    <property type="project" value="UniProtKB-KW"/>
</dbReference>
<dbReference type="Gene3D" id="3.10.129.30">
    <property type="entry name" value="Rv0098, thioesterase-like hot dog domain"/>
    <property type="match status" value="1"/>
</dbReference>
<dbReference type="InterPro" id="IPR022598">
    <property type="entry name" value="FcoT_ThioEstase"/>
</dbReference>
<dbReference type="InterPro" id="IPR043064">
    <property type="entry name" value="FcoT_ThioEstase_Rv0098-like_sf"/>
</dbReference>
<dbReference type="Pfam" id="PF10862">
    <property type="entry name" value="FcoT"/>
    <property type="match status" value="1"/>
</dbReference>
<keyword id="KW-0276">Fatty acid metabolism</keyword>
<keyword id="KW-0378">Hydrolase</keyword>
<keyword id="KW-0443">Lipid metabolism</keyword>
<keyword id="KW-0456">Lyase</keyword>
<keyword id="KW-1185">Reference proteome</keyword>
<organism>
    <name type="scientific">Mycobacterium bovis (strain ATCC BAA-935 / AF2122/97)</name>
    <dbReference type="NCBI Taxonomy" id="233413"/>
    <lineage>
        <taxon>Bacteria</taxon>
        <taxon>Bacillati</taxon>
        <taxon>Actinomycetota</taxon>
        <taxon>Actinomycetes</taxon>
        <taxon>Mycobacteriales</taxon>
        <taxon>Mycobacteriaceae</taxon>
        <taxon>Mycobacterium</taxon>
        <taxon>Mycobacterium tuberculosis complex</taxon>
    </lineage>
</organism>
<sequence>MSHTDLTPCTRVLASSGTVPIAEELLARVLEPYSCKGCRYLIDAQYSATEDSVLAYGNFTIGESAYIRSTGHFNAVELILCFNQLAYSAFAPAVLNEEIRVLRGWSIDDYCQHQLSSMLIRKASSRFRKPLNPQKFSARLLCRDLQVIERTWRYLKVPCVIEFWDENGGAASGEIELAALNIP</sequence>
<proteinExistence type="inferred from homology"/>
<gene>
    <name evidence="2" type="primary">fcoT</name>
    <name type="ordered locus">BQ2027_MB0101</name>
</gene>
<evidence type="ECO:0000250" key="1">
    <source>
        <dbReference type="UniProtKB" id="B2HKM2"/>
    </source>
</evidence>
<evidence type="ECO:0000250" key="2">
    <source>
        <dbReference type="UniProtKB" id="P9WM67"/>
    </source>
</evidence>
<evidence type="ECO:0000305" key="3"/>
<protein>
    <recommendedName>
        <fullName evidence="1">(2E)-enoyl-[ACP] glycyltransferase</fullName>
        <ecNumber evidence="1">4.3.2.11</ecNumber>
    </recommendedName>
    <alternativeName>
        <fullName evidence="1">(2E)-unsaturated fatty acyl-[ACP] glycyltransferase</fullName>
    </alternativeName>
    <alternativeName>
        <fullName evidence="2">Long-chain fatty acyl-CoA thioesterase FcoT</fullName>
        <ecNumber evidence="2">3.1.2.-</ecNumber>
    </alternativeName>
</protein>
<accession>P64686</accession>
<accession>A0A1R3XUB7</accession>
<accession>Q10894</accession>
<accession>X2BE08</accession>
<reference key="1">
    <citation type="journal article" date="2003" name="Proc. Natl. Acad. Sci. U.S.A.">
        <title>The complete genome sequence of Mycobacterium bovis.</title>
        <authorList>
            <person name="Garnier T."/>
            <person name="Eiglmeier K."/>
            <person name="Camus J.-C."/>
            <person name="Medina N."/>
            <person name="Mansoor H."/>
            <person name="Pryor M."/>
            <person name="Duthoy S."/>
            <person name="Grondin S."/>
            <person name="Lacroix C."/>
            <person name="Monsempe C."/>
            <person name="Simon S."/>
            <person name="Harris B."/>
            <person name="Atkin R."/>
            <person name="Doggett J."/>
            <person name="Mayes R."/>
            <person name="Keating L."/>
            <person name="Wheeler P.R."/>
            <person name="Parkhill J."/>
            <person name="Barrell B.G."/>
            <person name="Cole S.T."/>
            <person name="Gordon S.V."/>
            <person name="Hewinson R.G."/>
        </authorList>
    </citation>
    <scope>NUCLEOTIDE SEQUENCE [LARGE SCALE GENOMIC DNA]</scope>
    <source>
        <strain>ATCC BAA-935 / AF2122/97</strain>
    </source>
</reference>
<reference key="2">
    <citation type="journal article" date="2017" name="Genome Announc.">
        <title>Updated reference genome sequence and annotation of Mycobacterium bovis AF2122/97.</title>
        <authorList>
            <person name="Malone K.M."/>
            <person name="Farrell D."/>
            <person name="Stuber T.P."/>
            <person name="Schubert O.T."/>
            <person name="Aebersold R."/>
            <person name="Robbe-Austerman S."/>
            <person name="Gordon S.V."/>
        </authorList>
    </citation>
    <scope>NUCLEOTIDE SEQUENCE [LARGE SCALE GENOMIC DNA]</scope>
    <scope>GENOME REANNOTATION</scope>
    <source>
        <strain>ATCC BAA-935 / AF2122/97</strain>
    </source>
</reference>